<comment type="function">
    <text evidence="1">Could be involved in insertion of integral membrane proteins into the membrane.</text>
</comment>
<comment type="subcellular location">
    <subcellularLocation>
        <location evidence="1">Cell membrane</location>
        <topology evidence="1">Peripheral membrane protein</topology>
        <orientation evidence="1">Cytoplasmic side</orientation>
    </subcellularLocation>
</comment>
<comment type="similarity">
    <text evidence="1">Belongs to the UPF0161 family.</text>
</comment>
<accession>A9AXJ9</accession>
<proteinExistence type="inferred from homology"/>
<name>YIDD_HERA2</name>
<organism>
    <name type="scientific">Herpetosiphon aurantiacus (strain ATCC 23779 / DSM 785 / 114-95)</name>
    <dbReference type="NCBI Taxonomy" id="316274"/>
    <lineage>
        <taxon>Bacteria</taxon>
        <taxon>Bacillati</taxon>
        <taxon>Chloroflexota</taxon>
        <taxon>Chloroflexia</taxon>
        <taxon>Herpetosiphonales</taxon>
        <taxon>Herpetosiphonaceae</taxon>
        <taxon>Herpetosiphon</taxon>
    </lineage>
</organism>
<gene>
    <name type="ordered locus">Haur_0765</name>
</gene>
<sequence length="68" mass="7763">MGKILLALIRLYQRFSRYTPPSCIYTPTCSHYGYQAIAKYGAFKGTWLTLKRIARCHPWAQGGEDPVP</sequence>
<dbReference type="EMBL" id="CP000875">
    <property type="protein sequence ID" value="ABX03413.1"/>
    <property type="molecule type" value="Genomic_DNA"/>
</dbReference>
<dbReference type="FunCoup" id="A9AXJ9">
    <property type="interactions" value="287"/>
</dbReference>
<dbReference type="STRING" id="316274.Haur_0765"/>
<dbReference type="KEGG" id="hau:Haur_0765"/>
<dbReference type="eggNOG" id="COG0759">
    <property type="taxonomic scope" value="Bacteria"/>
</dbReference>
<dbReference type="HOGENOM" id="CLU_144811_6_1_0"/>
<dbReference type="InParanoid" id="A9AXJ9"/>
<dbReference type="BioCyc" id="HAUR316274:GHYA-777-MONOMER"/>
<dbReference type="Proteomes" id="UP000000787">
    <property type="component" value="Chromosome"/>
</dbReference>
<dbReference type="GO" id="GO:0005886">
    <property type="term" value="C:plasma membrane"/>
    <property type="evidence" value="ECO:0007669"/>
    <property type="project" value="UniProtKB-SubCell"/>
</dbReference>
<dbReference type="HAMAP" id="MF_00386">
    <property type="entry name" value="UPF0161_YidD"/>
    <property type="match status" value="1"/>
</dbReference>
<dbReference type="InterPro" id="IPR002696">
    <property type="entry name" value="Membr_insert_effic_factor_YidD"/>
</dbReference>
<dbReference type="NCBIfam" id="TIGR00278">
    <property type="entry name" value="membrane protein insertion efficiency factor YidD"/>
    <property type="match status" value="1"/>
</dbReference>
<dbReference type="PANTHER" id="PTHR33383">
    <property type="entry name" value="MEMBRANE PROTEIN INSERTION EFFICIENCY FACTOR-RELATED"/>
    <property type="match status" value="1"/>
</dbReference>
<dbReference type="PANTHER" id="PTHR33383:SF1">
    <property type="entry name" value="MEMBRANE PROTEIN INSERTION EFFICIENCY FACTOR-RELATED"/>
    <property type="match status" value="1"/>
</dbReference>
<dbReference type="Pfam" id="PF01809">
    <property type="entry name" value="YidD"/>
    <property type="match status" value="1"/>
</dbReference>
<dbReference type="SMART" id="SM01234">
    <property type="entry name" value="Haemolytic"/>
    <property type="match status" value="1"/>
</dbReference>
<feature type="chain" id="PRO_1000197753" description="Putative membrane protein insertion efficiency factor">
    <location>
        <begin position="1"/>
        <end position="68"/>
    </location>
</feature>
<evidence type="ECO:0000255" key="1">
    <source>
        <dbReference type="HAMAP-Rule" id="MF_00386"/>
    </source>
</evidence>
<reference key="1">
    <citation type="journal article" date="2011" name="Stand. Genomic Sci.">
        <title>Complete genome sequence of the filamentous gliding predatory bacterium Herpetosiphon aurantiacus type strain (114-95(T)).</title>
        <authorList>
            <person name="Kiss H."/>
            <person name="Nett M."/>
            <person name="Domin N."/>
            <person name="Martin K."/>
            <person name="Maresca J.A."/>
            <person name="Copeland A."/>
            <person name="Lapidus A."/>
            <person name="Lucas S."/>
            <person name="Berry K.W."/>
            <person name="Glavina Del Rio T."/>
            <person name="Dalin E."/>
            <person name="Tice H."/>
            <person name="Pitluck S."/>
            <person name="Richardson P."/>
            <person name="Bruce D."/>
            <person name="Goodwin L."/>
            <person name="Han C."/>
            <person name="Detter J.C."/>
            <person name="Schmutz J."/>
            <person name="Brettin T."/>
            <person name="Land M."/>
            <person name="Hauser L."/>
            <person name="Kyrpides N.C."/>
            <person name="Ivanova N."/>
            <person name="Goeker M."/>
            <person name="Woyke T."/>
            <person name="Klenk H.P."/>
            <person name="Bryant D.A."/>
        </authorList>
    </citation>
    <scope>NUCLEOTIDE SEQUENCE [LARGE SCALE GENOMIC DNA]</scope>
    <source>
        <strain>ATCC 23779 / DSM 785 / 114-95</strain>
    </source>
</reference>
<keyword id="KW-1003">Cell membrane</keyword>
<keyword id="KW-0472">Membrane</keyword>
<protein>
    <recommendedName>
        <fullName evidence="1">Putative membrane protein insertion efficiency factor</fullName>
    </recommendedName>
</protein>